<proteinExistence type="predicted"/>
<evidence type="ECO:0000255" key="1"/>
<evidence type="ECO:0000256" key="2">
    <source>
        <dbReference type="SAM" id="MobiDB-lite"/>
    </source>
</evidence>
<evidence type="ECO:0000305" key="3"/>
<protein>
    <recommendedName>
        <fullName>Uncharacterized membrane protein YlbC</fullName>
    </recommendedName>
</protein>
<sequence length="346" mass="39632">MKNILRAMVILLIICGTYVLFIQYGSVPEKKSNDSEPQVSNEEAQSGKRIHMPTSGLLSFMGKHADEVTKKLGEPERIDPSAYDYDWWVYNQGKDQYIQIGVLNNKVVTLFASGNDINAKPFKIGESTGEVFKTTQVAPFVNVEYKGNSYRFEFSEEDINTRPTVKVGKMYVQLYMDKFEGKLSSIRAFDAQTFVKQRPYEVVYRGELIKPKAVSDEKWKKIQTTSEKQILDLTNVIRVKHGLAKLEWDQPTAEVAFGHSEDMKENNYFSHVSKKYGSLKDRLEEGHVDFQQAGENIAYNYVDGPAAVEGWLNSEGHRKALLNSDYTHLGVGVDRKYYTQNFIKRW</sequence>
<gene>
    <name type="primary">ylbC</name>
    <name type="ordered locus">BSU14960</name>
</gene>
<name>YLBC_BACSU</name>
<dbReference type="EMBL" id="Z98682">
    <property type="protein sequence ID" value="CAB11349.1"/>
    <property type="molecule type" value="Genomic_DNA"/>
</dbReference>
<dbReference type="EMBL" id="AL009126">
    <property type="protein sequence ID" value="CAB13369.1"/>
    <property type="molecule type" value="Genomic_DNA"/>
</dbReference>
<dbReference type="PIR" id="H69873">
    <property type="entry name" value="H69873"/>
</dbReference>
<dbReference type="RefSeq" id="NP_389379.1">
    <property type="nucleotide sequence ID" value="NC_000964.3"/>
</dbReference>
<dbReference type="RefSeq" id="WP_003245434.1">
    <property type="nucleotide sequence ID" value="NZ_OZ025638.1"/>
</dbReference>
<dbReference type="SMR" id="O34586"/>
<dbReference type="FunCoup" id="O34586">
    <property type="interactions" value="3"/>
</dbReference>
<dbReference type="STRING" id="224308.BSU14960"/>
<dbReference type="PaxDb" id="224308-BSU14960"/>
<dbReference type="DNASU" id="937363"/>
<dbReference type="EnsemblBacteria" id="CAB13369">
    <property type="protein sequence ID" value="CAB13369"/>
    <property type="gene ID" value="BSU_14960"/>
</dbReference>
<dbReference type="GeneID" id="937363"/>
<dbReference type="KEGG" id="bsu:BSU14960"/>
<dbReference type="PATRIC" id="fig|224308.179.peg.1631"/>
<dbReference type="eggNOG" id="COG2340">
    <property type="taxonomic scope" value="Bacteria"/>
</dbReference>
<dbReference type="InParanoid" id="O34586"/>
<dbReference type="OrthoDB" id="9783944at2"/>
<dbReference type="PhylomeDB" id="O34586"/>
<dbReference type="BioCyc" id="BSUB:BSU14960-MONOMER"/>
<dbReference type="Proteomes" id="UP000001570">
    <property type="component" value="Chromosome"/>
</dbReference>
<dbReference type="GO" id="GO:0005886">
    <property type="term" value="C:plasma membrane"/>
    <property type="evidence" value="ECO:0007669"/>
    <property type="project" value="UniProtKB-SubCell"/>
</dbReference>
<dbReference type="CDD" id="cd05379">
    <property type="entry name" value="CAP_bacterial"/>
    <property type="match status" value="1"/>
</dbReference>
<dbReference type="Gene3D" id="3.40.33.10">
    <property type="entry name" value="CAP"/>
    <property type="match status" value="1"/>
</dbReference>
<dbReference type="InterPro" id="IPR029410">
    <property type="entry name" value="CAP_assoc"/>
</dbReference>
<dbReference type="InterPro" id="IPR014044">
    <property type="entry name" value="CAP_dom"/>
</dbReference>
<dbReference type="InterPro" id="IPR035940">
    <property type="entry name" value="CAP_sf"/>
</dbReference>
<dbReference type="PANTHER" id="PTHR31157">
    <property type="entry name" value="SCP DOMAIN-CONTAINING PROTEIN"/>
    <property type="match status" value="1"/>
</dbReference>
<dbReference type="PANTHER" id="PTHR31157:SF26">
    <property type="entry name" value="SCP-LIKE EXTRACELLULAR PROTEIN"/>
    <property type="match status" value="1"/>
</dbReference>
<dbReference type="Pfam" id="PF00188">
    <property type="entry name" value="CAP"/>
    <property type="match status" value="1"/>
</dbReference>
<dbReference type="Pfam" id="PF14504">
    <property type="entry name" value="CAP_assoc_N"/>
    <property type="match status" value="1"/>
</dbReference>
<dbReference type="SUPFAM" id="SSF55797">
    <property type="entry name" value="PR-1-like"/>
    <property type="match status" value="1"/>
</dbReference>
<comment type="subcellular location">
    <subcellularLocation>
        <location evidence="3">Cell membrane</location>
        <topology evidence="3">Single-pass membrane protein</topology>
    </subcellularLocation>
</comment>
<organism>
    <name type="scientific">Bacillus subtilis (strain 168)</name>
    <dbReference type="NCBI Taxonomy" id="224308"/>
    <lineage>
        <taxon>Bacteria</taxon>
        <taxon>Bacillati</taxon>
        <taxon>Bacillota</taxon>
        <taxon>Bacilli</taxon>
        <taxon>Bacillales</taxon>
        <taxon>Bacillaceae</taxon>
        <taxon>Bacillus</taxon>
    </lineage>
</organism>
<reference key="1">
    <citation type="submission" date="1997-08" db="EMBL/GenBank/DDBJ databases">
        <title>Bacillus subtilis chromosomal region downstream nprE.</title>
        <authorList>
            <person name="Bertero M."/>
            <person name="Presecan E."/>
            <person name="Glaser P."/>
            <person name="Richou A."/>
            <person name="Danchin A."/>
        </authorList>
    </citation>
    <scope>NUCLEOTIDE SEQUENCE [GENOMIC DNA]</scope>
    <source>
        <strain>168</strain>
    </source>
</reference>
<reference key="2">
    <citation type="journal article" date="1997" name="Nature">
        <title>The complete genome sequence of the Gram-positive bacterium Bacillus subtilis.</title>
        <authorList>
            <person name="Kunst F."/>
            <person name="Ogasawara N."/>
            <person name="Moszer I."/>
            <person name="Albertini A.M."/>
            <person name="Alloni G."/>
            <person name="Azevedo V."/>
            <person name="Bertero M.G."/>
            <person name="Bessieres P."/>
            <person name="Bolotin A."/>
            <person name="Borchert S."/>
            <person name="Borriss R."/>
            <person name="Boursier L."/>
            <person name="Brans A."/>
            <person name="Braun M."/>
            <person name="Brignell S.C."/>
            <person name="Bron S."/>
            <person name="Brouillet S."/>
            <person name="Bruschi C.V."/>
            <person name="Caldwell B."/>
            <person name="Capuano V."/>
            <person name="Carter N.M."/>
            <person name="Choi S.-K."/>
            <person name="Codani J.-J."/>
            <person name="Connerton I.F."/>
            <person name="Cummings N.J."/>
            <person name="Daniel R.A."/>
            <person name="Denizot F."/>
            <person name="Devine K.M."/>
            <person name="Duesterhoeft A."/>
            <person name="Ehrlich S.D."/>
            <person name="Emmerson P.T."/>
            <person name="Entian K.-D."/>
            <person name="Errington J."/>
            <person name="Fabret C."/>
            <person name="Ferrari E."/>
            <person name="Foulger D."/>
            <person name="Fritz C."/>
            <person name="Fujita M."/>
            <person name="Fujita Y."/>
            <person name="Fuma S."/>
            <person name="Galizzi A."/>
            <person name="Galleron N."/>
            <person name="Ghim S.-Y."/>
            <person name="Glaser P."/>
            <person name="Goffeau A."/>
            <person name="Golightly E.J."/>
            <person name="Grandi G."/>
            <person name="Guiseppi G."/>
            <person name="Guy B.J."/>
            <person name="Haga K."/>
            <person name="Haiech J."/>
            <person name="Harwood C.R."/>
            <person name="Henaut A."/>
            <person name="Hilbert H."/>
            <person name="Holsappel S."/>
            <person name="Hosono S."/>
            <person name="Hullo M.-F."/>
            <person name="Itaya M."/>
            <person name="Jones L.-M."/>
            <person name="Joris B."/>
            <person name="Karamata D."/>
            <person name="Kasahara Y."/>
            <person name="Klaerr-Blanchard M."/>
            <person name="Klein C."/>
            <person name="Kobayashi Y."/>
            <person name="Koetter P."/>
            <person name="Koningstein G."/>
            <person name="Krogh S."/>
            <person name="Kumano M."/>
            <person name="Kurita K."/>
            <person name="Lapidus A."/>
            <person name="Lardinois S."/>
            <person name="Lauber J."/>
            <person name="Lazarevic V."/>
            <person name="Lee S.-M."/>
            <person name="Levine A."/>
            <person name="Liu H."/>
            <person name="Masuda S."/>
            <person name="Mauel C."/>
            <person name="Medigue C."/>
            <person name="Medina N."/>
            <person name="Mellado R.P."/>
            <person name="Mizuno M."/>
            <person name="Moestl D."/>
            <person name="Nakai S."/>
            <person name="Noback M."/>
            <person name="Noone D."/>
            <person name="O'Reilly M."/>
            <person name="Ogawa K."/>
            <person name="Ogiwara A."/>
            <person name="Oudega B."/>
            <person name="Park S.-H."/>
            <person name="Parro V."/>
            <person name="Pohl T.M."/>
            <person name="Portetelle D."/>
            <person name="Porwollik S."/>
            <person name="Prescott A.M."/>
            <person name="Presecan E."/>
            <person name="Pujic P."/>
            <person name="Purnelle B."/>
            <person name="Rapoport G."/>
            <person name="Rey M."/>
            <person name="Reynolds S."/>
            <person name="Rieger M."/>
            <person name="Rivolta C."/>
            <person name="Rocha E."/>
            <person name="Roche B."/>
            <person name="Rose M."/>
            <person name="Sadaie Y."/>
            <person name="Sato T."/>
            <person name="Scanlan E."/>
            <person name="Schleich S."/>
            <person name="Schroeter R."/>
            <person name="Scoffone F."/>
            <person name="Sekiguchi J."/>
            <person name="Sekowska A."/>
            <person name="Seror S.J."/>
            <person name="Serror P."/>
            <person name="Shin B.-S."/>
            <person name="Soldo B."/>
            <person name="Sorokin A."/>
            <person name="Tacconi E."/>
            <person name="Takagi T."/>
            <person name="Takahashi H."/>
            <person name="Takemaru K."/>
            <person name="Takeuchi M."/>
            <person name="Tamakoshi A."/>
            <person name="Tanaka T."/>
            <person name="Terpstra P."/>
            <person name="Tognoni A."/>
            <person name="Tosato V."/>
            <person name="Uchiyama S."/>
            <person name="Vandenbol M."/>
            <person name="Vannier F."/>
            <person name="Vassarotti A."/>
            <person name="Viari A."/>
            <person name="Wambutt R."/>
            <person name="Wedler E."/>
            <person name="Wedler H."/>
            <person name="Weitzenegger T."/>
            <person name="Winters P."/>
            <person name="Wipat A."/>
            <person name="Yamamoto H."/>
            <person name="Yamane K."/>
            <person name="Yasumoto K."/>
            <person name="Yata K."/>
            <person name="Yoshida K."/>
            <person name="Yoshikawa H.-F."/>
            <person name="Zumstein E."/>
            <person name="Yoshikawa H."/>
            <person name="Danchin A."/>
        </authorList>
    </citation>
    <scope>NUCLEOTIDE SEQUENCE [LARGE SCALE GENOMIC DNA]</scope>
    <source>
        <strain>168</strain>
    </source>
</reference>
<keyword id="KW-1003">Cell membrane</keyword>
<keyword id="KW-0472">Membrane</keyword>
<keyword id="KW-1185">Reference proteome</keyword>
<keyword id="KW-0812">Transmembrane</keyword>
<keyword id="KW-1133">Transmembrane helix</keyword>
<accession>O34586</accession>
<accession>Q797T6</accession>
<feature type="chain" id="PRO_0000389097" description="Uncharacterized membrane protein YlbC">
    <location>
        <begin position="1"/>
        <end position="346"/>
    </location>
</feature>
<feature type="transmembrane region" description="Helical" evidence="1">
    <location>
        <begin position="7"/>
        <end position="27"/>
    </location>
</feature>
<feature type="domain" description="SCP">
    <location>
        <begin position="231"/>
        <end position="342"/>
    </location>
</feature>
<feature type="region of interest" description="Disordered" evidence="2">
    <location>
        <begin position="29"/>
        <end position="48"/>
    </location>
</feature>
<feature type="compositionally biased region" description="Polar residues" evidence="2">
    <location>
        <begin position="35"/>
        <end position="44"/>
    </location>
</feature>